<protein>
    <recommendedName>
        <fullName evidence="1">UPF0304 protein YPA_2053</fullName>
    </recommendedName>
</protein>
<proteinExistence type="inferred from homology"/>
<name>Y2053_YERPA</name>
<sequence length="164" mass="19492">MDMTNAQRLILSNQYKMMTMLDPENAERYRRQQTIVERGFGLQMRELDRDFGEMSEDTCRTIINIMEMHHALQVSWGNLKEKQDLDERRISFLGFDAATESRYLSYVRFMVNTEGRYTHFDSGTHGFNSQTPMWDKYQRMLAIWQSCPRQYHLSAVEISQIINA</sequence>
<feature type="chain" id="PRO_1000046770" description="UPF0304 protein YPA_2053">
    <location>
        <begin position="1"/>
        <end position="164"/>
    </location>
</feature>
<dbReference type="EMBL" id="CP000308">
    <property type="protein sequence ID" value="ABG14019.1"/>
    <property type="molecule type" value="Genomic_DNA"/>
</dbReference>
<dbReference type="RefSeq" id="WP_002210286.1">
    <property type="nucleotide sequence ID" value="NZ_CP009906.1"/>
</dbReference>
<dbReference type="SMR" id="Q1C6A3"/>
<dbReference type="KEGG" id="ypa:YPA_2053"/>
<dbReference type="Proteomes" id="UP000001971">
    <property type="component" value="Chromosome"/>
</dbReference>
<dbReference type="Gene3D" id="1.10.287.680">
    <property type="entry name" value="Helix hairpin bin"/>
    <property type="match status" value="1"/>
</dbReference>
<dbReference type="Gene3D" id="1.10.3190.10">
    <property type="entry name" value="yfbu gene product, domain 2"/>
    <property type="match status" value="1"/>
</dbReference>
<dbReference type="HAMAP" id="MF_00762">
    <property type="entry name" value="UPF0304"/>
    <property type="match status" value="1"/>
</dbReference>
<dbReference type="InterPro" id="IPR005587">
    <property type="entry name" value="UPF0304_YfbU"/>
</dbReference>
<dbReference type="InterPro" id="IPR023146">
    <property type="entry name" value="YfbU_alpha-helical_sf"/>
</dbReference>
<dbReference type="InterPro" id="IPR023145">
    <property type="entry name" value="YfbU_helix-hairpin_sf"/>
</dbReference>
<dbReference type="NCBIfam" id="NF003936">
    <property type="entry name" value="PRK05445.1"/>
    <property type="match status" value="1"/>
</dbReference>
<dbReference type="Pfam" id="PF03887">
    <property type="entry name" value="YfbU"/>
    <property type="match status" value="1"/>
</dbReference>
<dbReference type="PIRSF" id="PIRSF006272">
    <property type="entry name" value="UCP006272"/>
    <property type="match status" value="1"/>
</dbReference>
<dbReference type="SUPFAM" id="SSF116960">
    <property type="entry name" value="YfbU-like"/>
    <property type="match status" value="1"/>
</dbReference>
<accession>Q1C6A3</accession>
<gene>
    <name type="ordered locus">YPA_2053</name>
</gene>
<evidence type="ECO:0000255" key="1">
    <source>
        <dbReference type="HAMAP-Rule" id="MF_00762"/>
    </source>
</evidence>
<comment type="similarity">
    <text evidence="1">Belongs to the UPF0304 family.</text>
</comment>
<reference key="1">
    <citation type="journal article" date="2006" name="J. Bacteriol.">
        <title>Complete genome sequence of Yersinia pestis strains Antiqua and Nepal516: evidence of gene reduction in an emerging pathogen.</title>
        <authorList>
            <person name="Chain P.S.G."/>
            <person name="Hu P."/>
            <person name="Malfatti S.A."/>
            <person name="Radnedge L."/>
            <person name="Larimer F."/>
            <person name="Vergez L.M."/>
            <person name="Worsham P."/>
            <person name="Chu M.C."/>
            <person name="Andersen G.L."/>
        </authorList>
    </citation>
    <scope>NUCLEOTIDE SEQUENCE [LARGE SCALE GENOMIC DNA]</scope>
    <source>
        <strain>Antiqua</strain>
    </source>
</reference>
<organism>
    <name type="scientific">Yersinia pestis bv. Antiqua (strain Antiqua)</name>
    <dbReference type="NCBI Taxonomy" id="360102"/>
    <lineage>
        <taxon>Bacteria</taxon>
        <taxon>Pseudomonadati</taxon>
        <taxon>Pseudomonadota</taxon>
        <taxon>Gammaproteobacteria</taxon>
        <taxon>Enterobacterales</taxon>
        <taxon>Yersiniaceae</taxon>
        <taxon>Yersinia</taxon>
    </lineage>
</organism>